<feature type="initiator methionine" description="Removed" evidence="4 5 6">
    <location>
        <position position="1"/>
    </location>
</feature>
<feature type="chain" id="PRO_0000067474" description="Annexin A2">
    <location>
        <begin position="2"/>
        <end position="339"/>
    </location>
</feature>
<feature type="repeat" description="Annexin 1" evidence="3">
    <location>
        <begin position="33"/>
        <end position="104"/>
    </location>
</feature>
<feature type="repeat" description="Annexin 2" evidence="3">
    <location>
        <begin position="105"/>
        <end position="176"/>
    </location>
</feature>
<feature type="repeat" description="Annexin 3" evidence="3">
    <location>
        <begin position="189"/>
        <end position="261"/>
    </location>
</feature>
<feature type="repeat" description="Annexin 4" evidence="3">
    <location>
        <begin position="265"/>
        <end position="336"/>
    </location>
</feature>
<feature type="region of interest" description="S100A10-binding site" evidence="2">
    <location>
        <begin position="2"/>
        <end position="24"/>
    </location>
</feature>
<feature type="modified residue" description="N-acetylserine" evidence="5 6">
    <location>
        <position position="2"/>
    </location>
</feature>
<feature type="modified residue" description="Phosphotyrosine; by SRC" evidence="1">
    <location>
        <position position="24"/>
    </location>
</feature>
<feature type="modified residue" description="Phosphothreonine; by PKC" evidence="1">
    <location>
        <position position="26"/>
    </location>
</feature>
<feature type="helix" evidence="8">
    <location>
        <begin position="3"/>
        <end position="11"/>
    </location>
</feature>
<evidence type="ECO:0000250" key="1"/>
<evidence type="ECO:0000255" key="2"/>
<evidence type="ECO:0000255" key="3">
    <source>
        <dbReference type="PROSITE-ProRule" id="PRU01245"/>
    </source>
</evidence>
<evidence type="ECO:0000269" key="4">
    <source>
    </source>
</evidence>
<evidence type="ECO:0000269" key="5">
    <source>
    </source>
</evidence>
<evidence type="ECO:0000269" key="6">
    <source ref="4"/>
</evidence>
<evidence type="ECO:0000305" key="7"/>
<evidence type="ECO:0007829" key="8">
    <source>
        <dbReference type="PDB" id="1BT6"/>
    </source>
</evidence>
<keyword id="KW-0002">3D-structure</keyword>
<keyword id="KW-0007">Acetylation</keyword>
<keyword id="KW-0041">Annexin</keyword>
<keyword id="KW-0084">Basement membrane</keyword>
<keyword id="KW-0106">Calcium</keyword>
<keyword id="KW-0111">Calcium/phospholipid-binding</keyword>
<keyword id="KW-0903">Direct protein sequencing</keyword>
<keyword id="KW-0272">Extracellular matrix</keyword>
<keyword id="KW-0597">Phosphoprotein</keyword>
<keyword id="KW-1185">Reference proteome</keyword>
<keyword id="KW-0677">Repeat</keyword>
<keyword id="KW-0964">Secreted</keyword>
<gene>
    <name type="primary">ANXA2</name>
    <name type="synonym">ANX2</name>
</gene>
<comment type="function">
    <text>Calcium-regulated membrane-binding protein whose affinity for calcium is greatly enhanced by anionic phospholipids. It binds two calcium ions with high affinity.</text>
</comment>
<comment type="subunit">
    <text>Heterotetramer containing 2 light chains of S100A10/p11 and 2 heavy chains of ANXA2/p36.</text>
</comment>
<comment type="subcellular location">
    <subcellularLocation>
        <location>Secreted</location>
        <location>Extracellular space</location>
        <location>Extracellular matrix</location>
        <location>Basement membrane</location>
    </subcellularLocation>
    <text>In the lamina beneath the plasma membrane.</text>
</comment>
<comment type="domain">
    <text>A pair of annexin repeats may form one binding site for calcium and phospholipid.</text>
</comment>
<comment type="miscellaneous">
    <text>It may cross-link plasma membrane phospholipids with actin and the cytoskeleton and be involved with exocytosis.</text>
</comment>
<comment type="similarity">
    <text evidence="3 7">Belongs to the annexin family.</text>
</comment>
<comment type="online information" name="Protein Spotlight">
    <link uri="https://www.proteinspotlight.org/back_issues/086"/>
    <text>Red velvet - Issue 86 of September 2007</text>
</comment>
<protein>
    <recommendedName>
        <fullName>Annexin A2</fullName>
    </recommendedName>
    <alternativeName>
        <fullName>Annexin II</fullName>
    </alternativeName>
    <alternativeName>
        <fullName>Annexin-2</fullName>
    </alternativeName>
    <alternativeName>
        <fullName>Calpactin I heavy chain</fullName>
    </alternativeName>
    <alternativeName>
        <fullName>Calpactin-1 heavy chain</fullName>
    </alternativeName>
    <alternativeName>
        <fullName>Chromobindin-8</fullName>
    </alternativeName>
    <alternativeName>
        <fullName>Lipocortin II</fullName>
    </alternativeName>
    <alternativeName>
        <fullName>Placental anticoagulant protein IV</fullName>
        <shortName>PAP-IV</shortName>
    </alternativeName>
    <alternativeName>
        <fullName>Protein I</fullName>
    </alternativeName>
    <alternativeName>
        <fullName>p36</fullName>
    </alternativeName>
</protein>
<accession>P17785</accession>
<dbReference type="EMBL" id="X53334">
    <property type="protein sequence ID" value="CAA37421.1"/>
    <property type="molecule type" value="mRNA"/>
</dbReference>
<dbReference type="PIR" id="S10501">
    <property type="entry name" value="LUCH2"/>
</dbReference>
<dbReference type="RefSeq" id="NP_990682.1">
    <property type="nucleotide sequence ID" value="NM_205351.2"/>
</dbReference>
<dbReference type="RefSeq" id="XP_015134249.1">
    <property type="nucleotide sequence ID" value="XM_015278763.4"/>
</dbReference>
<dbReference type="RefSeq" id="XP_025009569.1">
    <property type="nucleotide sequence ID" value="XM_025153801.3"/>
</dbReference>
<dbReference type="RefSeq" id="XP_025009571.1">
    <property type="nucleotide sequence ID" value="XM_025153803.3"/>
</dbReference>
<dbReference type="RefSeq" id="XP_040562137.1">
    <property type="nucleotide sequence ID" value="XM_040706203.2"/>
</dbReference>
<dbReference type="RefSeq" id="XP_046780504.1">
    <property type="nucleotide sequence ID" value="XM_046924548.1"/>
</dbReference>
<dbReference type="RefSeq" id="XP_046780505.1">
    <property type="nucleotide sequence ID" value="XM_046924549.1"/>
</dbReference>
<dbReference type="RefSeq" id="XP_046780506.1">
    <property type="nucleotide sequence ID" value="XM_046924550.1"/>
</dbReference>
<dbReference type="RefSeq" id="XP_046780507.1">
    <property type="nucleotide sequence ID" value="XM_046924551.1"/>
</dbReference>
<dbReference type="RefSeq" id="XP_046780508.1">
    <property type="nucleotide sequence ID" value="XM_046924552.1"/>
</dbReference>
<dbReference type="RefSeq" id="XP_046780509.1">
    <property type="nucleotide sequence ID" value="XM_046924553.1"/>
</dbReference>
<dbReference type="PDB" id="1BT6">
    <property type="method" value="X-ray"/>
    <property type="resolution" value="2.40 A"/>
    <property type="chains" value="C/D=2-14"/>
</dbReference>
<dbReference type="PDBsum" id="1BT6"/>
<dbReference type="SMR" id="P17785"/>
<dbReference type="FunCoup" id="P17785">
    <property type="interactions" value="1426"/>
</dbReference>
<dbReference type="STRING" id="9031.ENSGALP00000048954"/>
<dbReference type="iPTMnet" id="P17785"/>
<dbReference type="PaxDb" id="9031-ENSGALP00000005971"/>
<dbReference type="Ensembl" id="ENSGALT00010060304.1">
    <property type="protein sequence ID" value="ENSGALP00010037063.1"/>
    <property type="gene ID" value="ENSGALG00010024693.1"/>
</dbReference>
<dbReference type="GeneID" id="396297"/>
<dbReference type="KEGG" id="gga:396297"/>
<dbReference type="CTD" id="302"/>
<dbReference type="VEuPathDB" id="HostDB:geneid_396297"/>
<dbReference type="eggNOG" id="KOG0819">
    <property type="taxonomic scope" value="Eukaryota"/>
</dbReference>
<dbReference type="GeneTree" id="ENSGT00940000154257"/>
<dbReference type="HOGENOM" id="CLU_025300_0_0_1"/>
<dbReference type="InParanoid" id="P17785"/>
<dbReference type="OMA" id="DLMRIRT"/>
<dbReference type="OrthoDB" id="37886at2759"/>
<dbReference type="PhylomeDB" id="P17785"/>
<dbReference type="TreeFam" id="TF105452"/>
<dbReference type="Reactome" id="R-GGA-6798695">
    <property type="pathway name" value="Neutrophil degranulation"/>
</dbReference>
<dbReference type="Reactome" id="R-GGA-75205">
    <property type="pathway name" value="Dissolution of Fibrin Clot"/>
</dbReference>
<dbReference type="Reactome" id="R-GGA-9860927">
    <property type="pathway name" value="Turbulent (oscillatory, disturbed) flow shear stress activates signaling by PIEZO1 and integrins in endothelial cells"/>
</dbReference>
<dbReference type="EvolutionaryTrace" id="P17785"/>
<dbReference type="PRO" id="PR:P17785"/>
<dbReference type="Proteomes" id="UP000000539">
    <property type="component" value="Chromosome 10"/>
</dbReference>
<dbReference type="Bgee" id="ENSGALG00000003770">
    <property type="expression patterns" value="Expressed in ovary and 14 other cell types or tissues"/>
</dbReference>
<dbReference type="GO" id="GO:0005604">
    <property type="term" value="C:basement membrane"/>
    <property type="evidence" value="ECO:0007669"/>
    <property type="project" value="UniProtKB-SubCell"/>
</dbReference>
<dbReference type="GO" id="GO:0034704">
    <property type="term" value="C:calcium channel complex"/>
    <property type="evidence" value="ECO:0000304"/>
    <property type="project" value="AgBase"/>
</dbReference>
<dbReference type="GO" id="GO:0062023">
    <property type="term" value="C:collagen-containing extracellular matrix"/>
    <property type="evidence" value="ECO:0000314"/>
    <property type="project" value="AgBase"/>
</dbReference>
<dbReference type="GO" id="GO:0005737">
    <property type="term" value="C:cytoplasm"/>
    <property type="evidence" value="ECO:0000318"/>
    <property type="project" value="GO_Central"/>
</dbReference>
<dbReference type="GO" id="GO:0005576">
    <property type="term" value="C:extracellular region"/>
    <property type="evidence" value="ECO:0007669"/>
    <property type="project" value="UniProtKB-KW"/>
</dbReference>
<dbReference type="GO" id="GO:0005634">
    <property type="term" value="C:nucleus"/>
    <property type="evidence" value="ECO:0000318"/>
    <property type="project" value="GO_Central"/>
</dbReference>
<dbReference type="GO" id="GO:0005886">
    <property type="term" value="C:plasma membrane"/>
    <property type="evidence" value="ECO:0000314"/>
    <property type="project" value="AgBase"/>
</dbReference>
<dbReference type="GO" id="GO:0032991">
    <property type="term" value="C:protein-containing complex"/>
    <property type="evidence" value="ECO:0000314"/>
    <property type="project" value="AgBase"/>
</dbReference>
<dbReference type="GO" id="GO:0031982">
    <property type="term" value="C:vesicle"/>
    <property type="evidence" value="ECO:0000314"/>
    <property type="project" value="AgBase"/>
</dbReference>
<dbReference type="GO" id="GO:0012506">
    <property type="term" value="C:vesicle membrane"/>
    <property type="evidence" value="ECO:0000318"/>
    <property type="project" value="GO_Central"/>
</dbReference>
<dbReference type="GO" id="GO:0005262">
    <property type="term" value="F:calcium channel activity"/>
    <property type="evidence" value="ECO:0000304"/>
    <property type="project" value="AgBase"/>
</dbReference>
<dbReference type="GO" id="GO:0005509">
    <property type="term" value="F:calcium ion binding"/>
    <property type="evidence" value="ECO:0007669"/>
    <property type="project" value="InterPro"/>
</dbReference>
<dbReference type="GO" id="GO:0005544">
    <property type="term" value="F:calcium-dependent phospholipid binding"/>
    <property type="evidence" value="ECO:0000318"/>
    <property type="project" value="GO_Central"/>
</dbReference>
<dbReference type="GO" id="GO:0008092">
    <property type="term" value="F:cytoskeletal protein binding"/>
    <property type="evidence" value="ECO:0007669"/>
    <property type="project" value="InterPro"/>
</dbReference>
<dbReference type="GO" id="GO:0001786">
    <property type="term" value="F:phosphatidylserine binding"/>
    <property type="evidence" value="ECO:0000318"/>
    <property type="project" value="GO_Central"/>
</dbReference>
<dbReference type="GO" id="GO:0004859">
    <property type="term" value="F:phospholipase inhibitor activity"/>
    <property type="evidence" value="ECO:0007669"/>
    <property type="project" value="InterPro"/>
</dbReference>
<dbReference type="GO" id="GO:0046790">
    <property type="term" value="F:virion binding"/>
    <property type="evidence" value="ECO:0000314"/>
    <property type="project" value="AgBase"/>
</dbReference>
<dbReference type="GO" id="GO:0099511">
    <property type="term" value="F:voltage-gated calcium channel activity involved in regulation of cytosolic calcium levels"/>
    <property type="evidence" value="ECO:0000314"/>
    <property type="project" value="AgBase"/>
</dbReference>
<dbReference type="GO" id="GO:0030282">
    <property type="term" value="P:bone mineralization"/>
    <property type="evidence" value="ECO:0000304"/>
    <property type="project" value="AgBase"/>
</dbReference>
<dbReference type="GO" id="GO:0055074">
    <property type="term" value="P:calcium ion homeostasis"/>
    <property type="evidence" value="ECO:0000304"/>
    <property type="project" value="AgBase"/>
</dbReference>
<dbReference type="GO" id="GO:0060956">
    <property type="term" value="P:endocardial cell differentiation"/>
    <property type="evidence" value="ECO:0000314"/>
    <property type="project" value="AgBase"/>
</dbReference>
<dbReference type="GO" id="GO:0003417">
    <property type="term" value="P:growth plate cartilage development"/>
    <property type="evidence" value="ECO:0000314"/>
    <property type="project" value="AgBase"/>
</dbReference>
<dbReference type="GO" id="GO:0051928">
    <property type="term" value="P:positive regulation of calcium ion transport"/>
    <property type="evidence" value="ECO:0000314"/>
    <property type="project" value="AgBase"/>
</dbReference>
<dbReference type="GO" id="GO:0032332">
    <property type="term" value="P:positive regulation of chondrocyte differentiation"/>
    <property type="evidence" value="ECO:0000314"/>
    <property type="project" value="AgBase"/>
</dbReference>
<dbReference type="GO" id="GO:0010756">
    <property type="term" value="P:positive regulation of plasminogen activation"/>
    <property type="evidence" value="ECO:0000314"/>
    <property type="project" value="AgBase"/>
</dbReference>
<dbReference type="GO" id="GO:1905602">
    <property type="term" value="P:positive regulation of receptor-mediated endocytosis involved in cholesterol transport"/>
    <property type="evidence" value="ECO:0000318"/>
    <property type="project" value="GO_Central"/>
</dbReference>
<dbReference type="GO" id="GO:0030511">
    <property type="term" value="P:positive regulation of transforming growth factor beta receptor signaling pathway"/>
    <property type="evidence" value="ECO:0000314"/>
    <property type="project" value="AgBase"/>
</dbReference>
<dbReference type="FunFam" id="1.10.220.10:FF:000001">
    <property type="entry name" value="Annexin"/>
    <property type="match status" value="1"/>
</dbReference>
<dbReference type="FunFam" id="1.10.220.10:FF:000002">
    <property type="entry name" value="Annexin"/>
    <property type="match status" value="1"/>
</dbReference>
<dbReference type="FunFam" id="1.10.220.10:FF:000003">
    <property type="entry name" value="Annexin"/>
    <property type="match status" value="1"/>
</dbReference>
<dbReference type="FunFam" id="1.10.220.10:FF:000007">
    <property type="entry name" value="Annexin"/>
    <property type="match status" value="1"/>
</dbReference>
<dbReference type="Gene3D" id="1.10.220.10">
    <property type="entry name" value="Annexin"/>
    <property type="match status" value="4"/>
</dbReference>
<dbReference type="InterPro" id="IPR001464">
    <property type="entry name" value="Annexin"/>
</dbReference>
<dbReference type="InterPro" id="IPR018502">
    <property type="entry name" value="Annexin_repeat"/>
</dbReference>
<dbReference type="InterPro" id="IPR018252">
    <property type="entry name" value="Annexin_repeat_CS"/>
</dbReference>
<dbReference type="InterPro" id="IPR037104">
    <property type="entry name" value="Annexin_sf"/>
</dbReference>
<dbReference type="InterPro" id="IPR002389">
    <property type="entry name" value="ANX2"/>
</dbReference>
<dbReference type="PANTHER" id="PTHR10502">
    <property type="entry name" value="ANNEXIN"/>
    <property type="match status" value="1"/>
</dbReference>
<dbReference type="PANTHER" id="PTHR10502:SF18">
    <property type="entry name" value="ANNEXIN A2-RELATED"/>
    <property type="match status" value="1"/>
</dbReference>
<dbReference type="Pfam" id="PF00191">
    <property type="entry name" value="Annexin"/>
    <property type="match status" value="4"/>
</dbReference>
<dbReference type="PRINTS" id="PR00196">
    <property type="entry name" value="ANNEXIN"/>
</dbReference>
<dbReference type="PRINTS" id="PR00198">
    <property type="entry name" value="ANNEXINII"/>
</dbReference>
<dbReference type="SMART" id="SM00335">
    <property type="entry name" value="ANX"/>
    <property type="match status" value="4"/>
</dbReference>
<dbReference type="SUPFAM" id="SSF47874">
    <property type="entry name" value="Annexin"/>
    <property type="match status" value="1"/>
</dbReference>
<dbReference type="PROSITE" id="PS00223">
    <property type="entry name" value="ANNEXIN_1"/>
    <property type="match status" value="4"/>
</dbReference>
<dbReference type="PROSITE" id="PS51897">
    <property type="entry name" value="ANNEXIN_2"/>
    <property type="match status" value="4"/>
</dbReference>
<proteinExistence type="evidence at protein level"/>
<reference key="1">
    <citation type="journal article" date="1990" name="Nucleic Acids Res.">
        <title>The cDNA sequence of chicken annexin II.</title>
        <authorList>
            <person name="Gerke V."/>
            <person name="Koch W."/>
        </authorList>
    </citation>
    <scope>NUCLEOTIDE SEQUENCE [MRNA]</scope>
</reference>
<reference key="2">
    <citation type="journal article" date="1988" name="FEBS Lett.">
        <title>A discontinuous epitope on p36, the major substrate of src tyrosine-protein-kinase, brings the phosphorylation site into the neighbourhood of a consensus sequence for Ca2+/lipid-binding proteins.</title>
        <authorList>
            <person name="Johnsson N."/>
            <person name="Johnsson K."/>
            <person name="Weber K."/>
        </authorList>
    </citation>
    <scope>PROTEIN SEQUENCE OF 2-70</scope>
</reference>
<reference key="3">
    <citation type="journal article" date="1988" name="EMBO J.">
        <title>p36, the major cytoplasmic substrate of src tyrosine protein kinase, binds to its p11 regulatory subunit via a short amino-terminal amphipathic helix.</title>
        <authorList>
            <person name="Johnsson N."/>
            <person name="Marriott G."/>
            <person name="Weber K."/>
        </authorList>
    </citation>
    <scope>PROTEIN SEQUENCE OF 2-30</scope>
    <scope>ACETYLATION AT SER-2</scope>
</reference>
<reference key="4">
    <citation type="submission" date="2007-01" db="UniProtKB">
        <authorList>
            <person name="Bienvenut W.V."/>
            <person name="Black E.J."/>
            <person name="Gillespie D.A."/>
        </authorList>
    </citation>
    <scope>PROTEIN SEQUENCE OF 2-63; 69-77 AND 314-324</scope>
    <scope>CLEAVAGE OF INITIATOR METHIONINE</scope>
    <scope>ACETYLATION AT SER-2</scope>
    <scope>IDENTIFICATION BY MASS SPECTROMETRY</scope>
    <source>
        <tissue>B-cell lymphoma</tissue>
    </source>
</reference>
<sequence>MSTVHEILSKLSLEGDHSLPPSAYATVKAYSNFDADRDAAALEAAIKTKGVDEVTIINILTNRSNEQRQDIAFAYQRRTKKELSAALKSALSGHLEAVILGLLKTPSQYDASELKAAMKGLGTDEDTLIEIICSRTNQELNEINRVYREMYKTELEKDIISDTSGDFRKLMVALAKGKRCEDTSVIDYELIDQDARELYDAGVKRKGTDVPKWINIMTERSVPHLQKVFERYKSYSPYDMLESIKKEVKGDLENAFLNLVQCIQNKQLYFADRLYDSMKGKGTRDKVLIRIMVSRCEVDMLKIKSEFKRKYGKSLYYFIQQDTKGDYQRALLNLCGGED</sequence>
<organism>
    <name type="scientific">Gallus gallus</name>
    <name type="common">Chicken</name>
    <dbReference type="NCBI Taxonomy" id="9031"/>
    <lineage>
        <taxon>Eukaryota</taxon>
        <taxon>Metazoa</taxon>
        <taxon>Chordata</taxon>
        <taxon>Craniata</taxon>
        <taxon>Vertebrata</taxon>
        <taxon>Euteleostomi</taxon>
        <taxon>Archelosauria</taxon>
        <taxon>Archosauria</taxon>
        <taxon>Dinosauria</taxon>
        <taxon>Saurischia</taxon>
        <taxon>Theropoda</taxon>
        <taxon>Coelurosauria</taxon>
        <taxon>Aves</taxon>
        <taxon>Neognathae</taxon>
        <taxon>Galloanserae</taxon>
        <taxon>Galliformes</taxon>
        <taxon>Phasianidae</taxon>
        <taxon>Phasianinae</taxon>
        <taxon>Gallus</taxon>
    </lineage>
</organism>
<name>ANXA2_CHICK</name>